<reference key="1">
    <citation type="journal article" date="1996" name="Biochem. Biophys. Res. Commun.">
        <title>Cloning, functional expression and tissue distribution of the human P2Y6 receptor.</title>
        <authorList>
            <person name="Communi D."/>
            <person name="Parmentier M."/>
            <person name="Boeynaems J.-M."/>
        </authorList>
    </citation>
    <scope>NUCLEOTIDE SEQUENCE [MRNA]</scope>
</reference>
<reference key="2">
    <citation type="journal article" date="1997" name="Genomics">
        <title>Chromosomal localization of the human P2y6 purinoceptor gene and phylogenetic analysis of the P2y purinoceptor family.</title>
        <authorList>
            <person name="Somers G.R."/>
            <person name="Hammet F."/>
            <person name="Woollatt E."/>
            <person name="Richards R.I."/>
            <person name="Southey M.C."/>
            <person name="Venter D.J."/>
        </authorList>
    </citation>
    <scope>NUCLEOTIDE SEQUENCE [MRNA]</scope>
</reference>
<reference key="3">
    <citation type="journal article" date="1997" name="Biochem. Biophys. Res. Commun.">
        <title>Cloning of P2Y6 cDNAs and identification of a pseudogene: comparison of P2Y receptor subtype expression in bone and brain tissues.</title>
        <authorList>
            <person name="Maier R."/>
            <person name="Glatz A."/>
            <person name="Mosbacher J."/>
            <person name="Bilbe G."/>
        </authorList>
    </citation>
    <scope>NUCLEOTIDE SEQUENCE [MRNA]</scope>
    <source>
        <tissue>Placenta</tissue>
    </source>
</reference>
<reference key="4">
    <citation type="journal article" date="1997" name="Biochem. Biophys. Res. Commun.">
        <authorList>
            <person name="Maier R."/>
            <person name="Glatz A."/>
            <person name="Mosbacher J."/>
            <person name="Bilbe G."/>
        </authorList>
    </citation>
    <scope>ERRATUM OF PUBMED:9268704</scope>
</reference>
<reference key="5">
    <citation type="journal article" date="2004" name="Proc. Natl. Acad. Sci. U.S.A.">
        <title>Large-scale cDNA transfection screening for genes related to cancer development and progression.</title>
        <authorList>
            <person name="Wan D."/>
            <person name="Gong Y."/>
            <person name="Qin W."/>
            <person name="Zhang P."/>
            <person name="Li J."/>
            <person name="Wei L."/>
            <person name="Zhou X."/>
            <person name="Li H."/>
            <person name="Qiu X."/>
            <person name="Zhong F."/>
            <person name="He L."/>
            <person name="Yu J."/>
            <person name="Yao G."/>
            <person name="Jiang H."/>
            <person name="Qian L."/>
            <person name="Yu Y."/>
            <person name="Shu H."/>
            <person name="Chen X."/>
            <person name="Xu H."/>
            <person name="Guo M."/>
            <person name="Pan Z."/>
            <person name="Chen Y."/>
            <person name="Ge C."/>
            <person name="Yang S."/>
            <person name="Gu J."/>
        </authorList>
    </citation>
    <scope>NUCLEOTIDE SEQUENCE [LARGE SCALE MRNA]</scope>
</reference>
<reference key="6">
    <citation type="submission" date="2002-04" db="EMBL/GenBank/DDBJ databases">
        <title>cDNA clones of human proteins involved in signal transduction sequenced by the Guthrie cDNA resource center (www.cdna.org).</title>
        <authorList>
            <person name="Puhl H.L. III"/>
            <person name="Ikeda S.R."/>
            <person name="Aronstam R.S."/>
        </authorList>
    </citation>
    <scope>NUCLEOTIDE SEQUENCE [LARGE SCALE MRNA]</scope>
</reference>
<reference key="7">
    <citation type="submission" date="2003-05" db="EMBL/GenBank/DDBJ databases">
        <title>Cloning of human full-length CDSs in BD Creator(TM) system donor vector.</title>
        <authorList>
            <person name="Kalnine N."/>
            <person name="Chen X."/>
            <person name="Rolfs A."/>
            <person name="Halleck A."/>
            <person name="Hines L."/>
            <person name="Eisenstein S."/>
            <person name="Koundinya M."/>
            <person name="Raphael J."/>
            <person name="Moreira D."/>
            <person name="Kelley T."/>
            <person name="LaBaer J."/>
            <person name="Lin Y."/>
            <person name="Phelan M."/>
            <person name="Farmer A."/>
        </authorList>
    </citation>
    <scope>NUCLEOTIDE SEQUENCE [LARGE SCALE MRNA]</scope>
</reference>
<reference key="8">
    <citation type="journal article" date="2004" name="Genome Res.">
        <title>The status, quality, and expansion of the NIH full-length cDNA project: the Mammalian Gene Collection (MGC).</title>
        <authorList>
            <consortium name="The MGC Project Team"/>
        </authorList>
    </citation>
    <scope>NUCLEOTIDE SEQUENCE [LARGE SCALE MRNA]</scope>
    <source>
        <tissue>Brain</tissue>
    </source>
</reference>
<dbReference type="EMBL" id="X97058">
    <property type="protein sequence ID" value="CAA65770.1"/>
    <property type="molecule type" value="mRNA"/>
</dbReference>
<dbReference type="EMBL" id="U52464">
    <property type="protein sequence ID" value="AAB03572.1"/>
    <property type="molecule type" value="mRNA"/>
</dbReference>
<dbReference type="EMBL" id="AF007892">
    <property type="protein sequence ID" value="AAB80713.1"/>
    <property type="molecule type" value="mRNA"/>
</dbReference>
<dbReference type="EMBL" id="AF007891">
    <property type="protein sequence ID" value="AAB80712.1"/>
    <property type="molecule type" value="mRNA"/>
</dbReference>
<dbReference type="EMBL" id="AF218005">
    <property type="protein sequence ID" value="AAG17247.1"/>
    <property type="molecule type" value="mRNA"/>
</dbReference>
<dbReference type="EMBL" id="AF498920">
    <property type="protein sequence ID" value="AAM18129.1"/>
    <property type="molecule type" value="mRNA"/>
</dbReference>
<dbReference type="EMBL" id="BT006771">
    <property type="protein sequence ID" value="AAP35417.1"/>
    <property type="molecule type" value="mRNA"/>
</dbReference>
<dbReference type="EMBL" id="BC000571">
    <property type="protein sequence ID" value="AAH00571.1"/>
    <property type="molecule type" value="mRNA"/>
</dbReference>
<dbReference type="EMBL" id="BC009391">
    <property type="protein sequence ID" value="AAH09391.1"/>
    <property type="molecule type" value="mRNA"/>
</dbReference>
<dbReference type="CCDS" id="CCDS8220.1"/>
<dbReference type="PIR" id="JC4800">
    <property type="entry name" value="JC4800"/>
</dbReference>
<dbReference type="RefSeq" id="NP_001264133.1">
    <property type="nucleotide sequence ID" value="NM_001277204.2"/>
</dbReference>
<dbReference type="RefSeq" id="NP_001264134.1">
    <property type="nucleotide sequence ID" value="NM_001277205.2"/>
</dbReference>
<dbReference type="RefSeq" id="NP_001264135.1">
    <property type="nucleotide sequence ID" value="NM_001277206.2"/>
</dbReference>
<dbReference type="RefSeq" id="NP_001264136.1">
    <property type="nucleotide sequence ID" value="NM_001277207.2"/>
</dbReference>
<dbReference type="RefSeq" id="NP_001264137.1">
    <property type="nucleotide sequence ID" value="NM_001277208.1"/>
</dbReference>
<dbReference type="RefSeq" id="NP_789766.1">
    <property type="nucleotide sequence ID" value="NM_176796.3"/>
</dbReference>
<dbReference type="RefSeq" id="NP_789767.1">
    <property type="nucleotide sequence ID" value="NM_176797.3"/>
</dbReference>
<dbReference type="RefSeq" id="NP_789768.1">
    <property type="nucleotide sequence ID" value="NM_176798.2"/>
</dbReference>
<dbReference type="RefSeq" id="XP_005274079.1">
    <property type="nucleotide sequence ID" value="XM_005274022.4"/>
</dbReference>
<dbReference type="RefSeq" id="XP_006718634.1">
    <property type="nucleotide sequence ID" value="XM_006718571.4"/>
</dbReference>
<dbReference type="RefSeq" id="XP_011543379.1">
    <property type="nucleotide sequence ID" value="XM_011545077.2"/>
</dbReference>
<dbReference type="RefSeq" id="XP_011543381.1">
    <property type="nucleotide sequence ID" value="XM_011545079.3"/>
</dbReference>
<dbReference type="RefSeq" id="XP_047282993.1">
    <property type="nucleotide sequence ID" value="XM_047427037.1"/>
</dbReference>
<dbReference type="RefSeq" id="XP_047282994.1">
    <property type="nucleotide sequence ID" value="XM_047427038.1"/>
</dbReference>
<dbReference type="RefSeq" id="XP_047282995.1">
    <property type="nucleotide sequence ID" value="XM_047427039.1"/>
</dbReference>
<dbReference type="RefSeq" id="XP_054224971.1">
    <property type="nucleotide sequence ID" value="XM_054368996.1"/>
</dbReference>
<dbReference type="RefSeq" id="XP_054224972.1">
    <property type="nucleotide sequence ID" value="XM_054368997.1"/>
</dbReference>
<dbReference type="RefSeq" id="XP_054224973.1">
    <property type="nucleotide sequence ID" value="XM_054368998.1"/>
</dbReference>
<dbReference type="RefSeq" id="XP_054224974.1">
    <property type="nucleotide sequence ID" value="XM_054368999.1"/>
</dbReference>
<dbReference type="RefSeq" id="XP_054224975.1">
    <property type="nucleotide sequence ID" value="XM_054369000.1"/>
</dbReference>
<dbReference type="RefSeq" id="XP_054224976.1">
    <property type="nucleotide sequence ID" value="XM_054369001.1"/>
</dbReference>
<dbReference type="SMR" id="Q15077"/>
<dbReference type="BioGRID" id="111070">
    <property type="interactions" value="384"/>
</dbReference>
<dbReference type="CORUM" id="Q15077"/>
<dbReference type="FunCoup" id="Q15077">
    <property type="interactions" value="1052"/>
</dbReference>
<dbReference type="IntAct" id="Q15077">
    <property type="interactions" value="377"/>
</dbReference>
<dbReference type="MINT" id="Q15077"/>
<dbReference type="STRING" id="9606.ENSP00000480966"/>
<dbReference type="BindingDB" id="Q15077"/>
<dbReference type="ChEMBL" id="CHEMBL4714"/>
<dbReference type="DrugBank" id="DB16833">
    <property type="generic name" value="Adenosine disphosphate"/>
</dbReference>
<dbReference type="DrugBank" id="DB04005">
    <property type="generic name" value="Uridine 5'-triphosphate"/>
</dbReference>
<dbReference type="DrugCentral" id="Q15077"/>
<dbReference type="GuidetoPHARMACOLOGY" id="326"/>
<dbReference type="GlyCosmos" id="Q15077">
    <property type="glycosylation" value="1 site, No reported glycans"/>
</dbReference>
<dbReference type="GlyGen" id="Q15077">
    <property type="glycosylation" value="1 site"/>
</dbReference>
<dbReference type="iPTMnet" id="Q15077"/>
<dbReference type="PhosphoSitePlus" id="Q15077"/>
<dbReference type="BioMuta" id="P2RY6"/>
<dbReference type="DMDM" id="2495018"/>
<dbReference type="jPOST" id="Q15077"/>
<dbReference type="MassIVE" id="Q15077"/>
<dbReference type="PaxDb" id="9606-ENSP00000480966"/>
<dbReference type="PeptideAtlas" id="Q15077"/>
<dbReference type="ProteomicsDB" id="60428"/>
<dbReference type="Antibodypedia" id="17126">
    <property type="antibodies" value="259 antibodies from 37 providers"/>
</dbReference>
<dbReference type="DNASU" id="5031"/>
<dbReference type="Ensembl" id="ENST00000349767.6">
    <property type="protein sequence ID" value="ENSP00000309771.2"/>
    <property type="gene ID" value="ENSG00000171631.16"/>
</dbReference>
<dbReference type="Ensembl" id="ENST00000393590.3">
    <property type="protein sequence ID" value="ENSP00000377215.2"/>
    <property type="gene ID" value="ENSG00000171631.16"/>
</dbReference>
<dbReference type="Ensembl" id="ENST00000393591.5">
    <property type="protein sequence ID" value="ENSP00000377216.1"/>
    <property type="gene ID" value="ENSG00000171631.16"/>
</dbReference>
<dbReference type="Ensembl" id="ENST00000393592.7">
    <property type="protein sequence ID" value="ENSP00000377217.2"/>
    <property type="gene ID" value="ENSG00000171631.16"/>
</dbReference>
<dbReference type="Ensembl" id="ENST00000535931.2">
    <property type="protein sequence ID" value="ENSP00000440770.2"/>
    <property type="gene ID" value="ENSG00000171631.16"/>
</dbReference>
<dbReference type="Ensembl" id="ENST00000538328.2">
    <property type="protein sequence ID" value="ENSP00000442990.1"/>
    <property type="gene ID" value="ENSG00000171631.16"/>
</dbReference>
<dbReference type="Ensembl" id="ENST00000540124.6">
    <property type="protein sequence ID" value="ENSP00000442551.1"/>
    <property type="gene ID" value="ENSG00000171631.16"/>
</dbReference>
<dbReference type="Ensembl" id="ENST00000540342.6">
    <property type="protein sequence ID" value="ENSP00000443427.1"/>
    <property type="gene ID" value="ENSG00000171631.16"/>
</dbReference>
<dbReference type="Ensembl" id="ENST00000542092.5">
    <property type="protein sequence ID" value="ENSP00000445652.1"/>
    <property type="gene ID" value="ENSG00000171631.16"/>
</dbReference>
<dbReference type="Ensembl" id="ENST00000544437.6">
    <property type="protein sequence ID" value="ENSP00000441079.2"/>
    <property type="gene ID" value="ENSG00000171631.16"/>
</dbReference>
<dbReference type="Ensembl" id="ENST00000618468.5">
    <property type="protein sequence ID" value="ENSP00000480966.1"/>
    <property type="gene ID" value="ENSG00000171631.16"/>
</dbReference>
<dbReference type="Ensembl" id="ENST00000679753.1">
    <property type="protein sequence ID" value="ENSP00000504879.1"/>
    <property type="gene ID" value="ENSG00000171631.16"/>
</dbReference>
<dbReference type="Ensembl" id="ENST00000680955.1">
    <property type="protein sequence ID" value="ENSP00000505646.1"/>
    <property type="gene ID" value="ENSG00000171631.16"/>
</dbReference>
<dbReference type="GeneID" id="5031"/>
<dbReference type="KEGG" id="hsa:5031"/>
<dbReference type="MANE-Select" id="ENST00000540124.6">
    <property type="protein sequence ID" value="ENSP00000442551.1"/>
    <property type="RefSeq nucleotide sequence ID" value="NM_001277204.2"/>
    <property type="RefSeq protein sequence ID" value="NP_001264133.1"/>
</dbReference>
<dbReference type="UCSC" id="uc001otm.5">
    <property type="organism name" value="human"/>
</dbReference>
<dbReference type="AGR" id="HGNC:8543"/>
<dbReference type="CTD" id="5031"/>
<dbReference type="DisGeNET" id="5031"/>
<dbReference type="GeneCards" id="P2RY6"/>
<dbReference type="HGNC" id="HGNC:8543">
    <property type="gene designation" value="P2RY6"/>
</dbReference>
<dbReference type="HPA" id="ENSG00000171631">
    <property type="expression patterns" value="Tissue enhanced (lymphoid)"/>
</dbReference>
<dbReference type="MIM" id="602451">
    <property type="type" value="gene"/>
</dbReference>
<dbReference type="neXtProt" id="NX_Q15077"/>
<dbReference type="OpenTargets" id="ENSG00000171631"/>
<dbReference type="PharmGKB" id="PA32872"/>
<dbReference type="VEuPathDB" id="HostDB:ENSG00000171631"/>
<dbReference type="eggNOG" id="ENOG502QRYJ">
    <property type="taxonomic scope" value="Eukaryota"/>
</dbReference>
<dbReference type="GeneTree" id="ENSGT01030000234621"/>
<dbReference type="InParanoid" id="Q15077"/>
<dbReference type="OMA" id="ICGGVWL"/>
<dbReference type="OrthoDB" id="9881476at2759"/>
<dbReference type="PAN-GO" id="Q15077">
    <property type="GO annotations" value="6 GO annotations based on evolutionary models"/>
</dbReference>
<dbReference type="PhylomeDB" id="Q15077"/>
<dbReference type="TreeFam" id="TF330775"/>
<dbReference type="PathwayCommons" id="Q15077"/>
<dbReference type="Reactome" id="R-HSA-416476">
    <property type="pathway name" value="G alpha (q) signalling events"/>
</dbReference>
<dbReference type="Reactome" id="R-HSA-417957">
    <property type="pathway name" value="P2Y receptors"/>
</dbReference>
<dbReference type="SignaLink" id="Q15077"/>
<dbReference type="SIGNOR" id="Q15077"/>
<dbReference type="BioGRID-ORCS" id="5031">
    <property type="hits" value="24 hits in 1145 CRISPR screens"/>
</dbReference>
<dbReference type="ChiTaRS" id="P2RY6">
    <property type="organism name" value="human"/>
</dbReference>
<dbReference type="GeneWiki" id="P2RY6"/>
<dbReference type="GenomeRNAi" id="5031"/>
<dbReference type="Pharos" id="Q15077">
    <property type="development level" value="Tchem"/>
</dbReference>
<dbReference type="PRO" id="PR:Q15077"/>
<dbReference type="Proteomes" id="UP000005640">
    <property type="component" value="Chromosome 11"/>
</dbReference>
<dbReference type="RNAct" id="Q15077">
    <property type="molecule type" value="protein"/>
</dbReference>
<dbReference type="Bgee" id="ENSG00000171631">
    <property type="expression patterns" value="Expressed in spleen and 117 other cell types or tissues"/>
</dbReference>
<dbReference type="ExpressionAtlas" id="Q15077">
    <property type="expression patterns" value="baseline and differential"/>
</dbReference>
<dbReference type="GO" id="GO:0005886">
    <property type="term" value="C:plasma membrane"/>
    <property type="evidence" value="ECO:0000318"/>
    <property type="project" value="GO_Central"/>
</dbReference>
<dbReference type="GO" id="GO:0001621">
    <property type="term" value="F:G protein-coupled ADP receptor activity"/>
    <property type="evidence" value="ECO:0000314"/>
    <property type="project" value="ARUK-UCL"/>
</dbReference>
<dbReference type="GO" id="GO:0004930">
    <property type="term" value="F:G protein-coupled receptor activity"/>
    <property type="evidence" value="ECO:0000304"/>
    <property type="project" value="ProtInc"/>
</dbReference>
<dbReference type="GO" id="GO:0045029">
    <property type="term" value="F:G protein-coupled UDP receptor activity"/>
    <property type="evidence" value="ECO:0000314"/>
    <property type="project" value="ARUK-UCL"/>
</dbReference>
<dbReference type="GO" id="GO:0045030">
    <property type="term" value="F:G protein-coupled UTP receptor activity"/>
    <property type="evidence" value="ECO:0000314"/>
    <property type="project" value="ARUK-UCL"/>
</dbReference>
<dbReference type="GO" id="GO:0071380">
    <property type="term" value="P:cellular response to prostaglandin E stimulus"/>
    <property type="evidence" value="ECO:0007669"/>
    <property type="project" value="Ensembl"/>
</dbReference>
<dbReference type="GO" id="GO:0071415">
    <property type="term" value="P:cellular response to purine-containing compound"/>
    <property type="evidence" value="ECO:0000314"/>
    <property type="project" value="ARUK-UCL"/>
</dbReference>
<dbReference type="GO" id="GO:1905835">
    <property type="term" value="P:cellular response to pyrimidine ribonucleotide"/>
    <property type="evidence" value="ECO:0000314"/>
    <property type="project" value="ARUK-UCL"/>
</dbReference>
<dbReference type="GO" id="GO:0007186">
    <property type="term" value="P:G protein-coupled receptor signaling pathway"/>
    <property type="evidence" value="ECO:0000318"/>
    <property type="project" value="GO_Central"/>
</dbReference>
<dbReference type="GO" id="GO:0006909">
    <property type="term" value="P:phagocytosis"/>
    <property type="evidence" value="ECO:0000250"/>
    <property type="project" value="ARUK-UCL"/>
</dbReference>
<dbReference type="GO" id="GO:0007200">
    <property type="term" value="P:phospholipase C-activating G protein-coupled receptor signaling pathway"/>
    <property type="evidence" value="ECO:0000304"/>
    <property type="project" value="ARUK-UCL"/>
</dbReference>
<dbReference type="GO" id="GO:0070374">
    <property type="term" value="P:positive regulation of ERK1 and ERK2 cascade"/>
    <property type="evidence" value="ECO:0000314"/>
    <property type="project" value="BHF-UCL"/>
</dbReference>
<dbReference type="GO" id="GO:0032962">
    <property type="term" value="P:positive regulation of inositol trisphosphate biosynthetic process"/>
    <property type="evidence" value="ECO:0000314"/>
    <property type="project" value="ARUK-UCL"/>
</dbReference>
<dbReference type="GO" id="GO:0051281">
    <property type="term" value="P:positive regulation of release of sequestered calcium ion into cytosol"/>
    <property type="evidence" value="ECO:0000250"/>
    <property type="project" value="ARUK-UCL"/>
</dbReference>
<dbReference type="GO" id="GO:1904707">
    <property type="term" value="P:positive regulation of vascular associated smooth muscle cell proliferation"/>
    <property type="evidence" value="ECO:0000315"/>
    <property type="project" value="BHF-UCL"/>
</dbReference>
<dbReference type="GO" id="GO:0030321">
    <property type="term" value="P:transepithelial chloride transport"/>
    <property type="evidence" value="ECO:0007669"/>
    <property type="project" value="Ensembl"/>
</dbReference>
<dbReference type="CDD" id="cd15379">
    <property type="entry name" value="7tmA_P2Y6"/>
    <property type="match status" value="1"/>
</dbReference>
<dbReference type="FunFam" id="1.20.1070.10:FF:000209">
    <property type="entry name" value="p2Y purinoceptor 6"/>
    <property type="match status" value="1"/>
</dbReference>
<dbReference type="Gene3D" id="1.20.1070.10">
    <property type="entry name" value="Rhodopsin 7-helix transmembrane proteins"/>
    <property type="match status" value="1"/>
</dbReference>
<dbReference type="InterPro" id="IPR000276">
    <property type="entry name" value="GPCR_Rhodpsn"/>
</dbReference>
<dbReference type="InterPro" id="IPR017452">
    <property type="entry name" value="GPCR_Rhodpsn_7TM"/>
</dbReference>
<dbReference type="InterPro" id="IPR001973">
    <property type="entry name" value="P2Y6_rcpt"/>
</dbReference>
<dbReference type="PANTHER" id="PTHR24231:SF16">
    <property type="entry name" value="P2Y PURINOCEPTOR 6"/>
    <property type="match status" value="1"/>
</dbReference>
<dbReference type="PANTHER" id="PTHR24231">
    <property type="entry name" value="PURINOCEPTOR-RELATED G-PROTEIN COUPLED RECEPTOR"/>
    <property type="match status" value="1"/>
</dbReference>
<dbReference type="Pfam" id="PF00001">
    <property type="entry name" value="7tm_1"/>
    <property type="match status" value="1"/>
</dbReference>
<dbReference type="PRINTS" id="PR00237">
    <property type="entry name" value="GPCRRHODOPSN"/>
</dbReference>
<dbReference type="PRINTS" id="PR01068">
    <property type="entry name" value="P2Y6PRNOCPTR"/>
</dbReference>
<dbReference type="PRINTS" id="PR01157">
    <property type="entry name" value="P2YPURNOCPTR"/>
</dbReference>
<dbReference type="SUPFAM" id="SSF81321">
    <property type="entry name" value="Family A G protein-coupled receptor-like"/>
    <property type="match status" value="1"/>
</dbReference>
<dbReference type="PROSITE" id="PS50262">
    <property type="entry name" value="G_PROTEIN_RECEP_F1_2"/>
    <property type="match status" value="1"/>
</dbReference>
<feature type="chain" id="PRO_0000070028" description="P2Y purinoceptor 6">
    <location>
        <begin position="1"/>
        <end position="328"/>
    </location>
</feature>
<feature type="topological domain" description="Extracellular" evidence="1">
    <location>
        <begin position="1"/>
        <end position="27"/>
    </location>
</feature>
<feature type="transmembrane region" description="Helical; Name=1" evidence="1">
    <location>
        <begin position="28"/>
        <end position="48"/>
    </location>
</feature>
<feature type="topological domain" description="Cytoplasmic" evidence="1">
    <location>
        <begin position="49"/>
        <end position="62"/>
    </location>
</feature>
<feature type="transmembrane region" description="Helical; Name=2" evidence="1">
    <location>
        <begin position="63"/>
        <end position="83"/>
    </location>
</feature>
<feature type="topological domain" description="Extracellular" evidence="1">
    <location>
        <begin position="84"/>
        <end position="101"/>
    </location>
</feature>
<feature type="transmembrane region" description="Helical; Name=3" evidence="1">
    <location>
        <begin position="102"/>
        <end position="122"/>
    </location>
</feature>
<feature type="topological domain" description="Cytoplasmic" evidence="1">
    <location>
        <begin position="123"/>
        <end position="144"/>
    </location>
</feature>
<feature type="transmembrane region" description="Helical; Name=4" evidence="1">
    <location>
        <begin position="145"/>
        <end position="165"/>
    </location>
</feature>
<feature type="topological domain" description="Extracellular" evidence="1">
    <location>
        <begin position="166"/>
        <end position="194"/>
    </location>
</feature>
<feature type="transmembrane region" description="Helical; Name=5" evidence="1">
    <location>
        <begin position="195"/>
        <end position="215"/>
    </location>
</feature>
<feature type="topological domain" description="Cytoplasmic" evidence="1">
    <location>
        <begin position="216"/>
        <end position="236"/>
    </location>
</feature>
<feature type="transmembrane region" description="Helical; Name=6" evidence="1">
    <location>
        <begin position="237"/>
        <end position="257"/>
    </location>
</feature>
<feature type="topological domain" description="Extracellular" evidence="1">
    <location>
        <begin position="258"/>
        <end position="280"/>
    </location>
</feature>
<feature type="transmembrane region" description="Helical; Name=7" evidence="1">
    <location>
        <begin position="281"/>
        <end position="303"/>
    </location>
</feature>
<feature type="topological domain" description="Cytoplasmic" evidence="1">
    <location>
        <begin position="304"/>
        <end position="328"/>
    </location>
</feature>
<feature type="glycosylation site" description="N-linked (GlcNAc...) asparagine" evidence="1">
    <location>
        <position position="5"/>
    </location>
</feature>
<feature type="disulfide bond" evidence="2">
    <location>
        <begin position="99"/>
        <end position="177"/>
    </location>
</feature>
<feature type="sequence conflict" description="In Ref. 2." evidence="3" ref="2">
    <location>
        <begin position="2"/>
        <end position="3"/>
    </location>
</feature>
<sequence>MEWDNGTGQALGLPPTTCVYRENFKQLLLPPVYSAVLAAGLPLNICVITQICTSRRALTRTAVYTLNLALADLLYACSLPLLIYNYAQGDHWPFGDFACRLVRFLFYANLHGSILFLTCISFQRYLGICHPLAPWHKRGGRRAAWLVCVAVWLAVTTQCLPTAIFAATGIQRNRTVCYDLSPPALATHYMPYGMALTVIGFLLPFAALLACYCLLACRLCRQDGPAEPVAQERRGKAARMAVVVAAAFAISFLPFHITKTAYLAVRSTPGVPCTVLEAFAAAYKGTRPFASANSVLDPILFYFTQKKFRRRPHELLQKLTAKWQRQGR</sequence>
<protein>
    <recommendedName>
        <fullName>P2Y purinoceptor 6</fullName>
        <shortName>P2Y6</shortName>
    </recommendedName>
</protein>
<keyword id="KW-1003">Cell membrane</keyword>
<keyword id="KW-1015">Disulfide bond</keyword>
<keyword id="KW-0297">G-protein coupled receptor</keyword>
<keyword id="KW-0325">Glycoprotein</keyword>
<keyword id="KW-0472">Membrane</keyword>
<keyword id="KW-1267">Proteomics identification</keyword>
<keyword id="KW-0675">Receptor</keyword>
<keyword id="KW-1185">Reference proteome</keyword>
<keyword id="KW-0807">Transducer</keyword>
<keyword id="KW-0812">Transmembrane</keyword>
<keyword id="KW-1133">Transmembrane helix</keyword>
<gene>
    <name type="primary">P2RY6</name>
    <name type="ORF">PP2891</name>
</gene>
<proteinExistence type="evidence at protein level"/>
<accession>Q15077</accession>
<accession>Q15754</accession>
<name>P2RY6_HUMAN</name>
<organism>
    <name type="scientific">Homo sapiens</name>
    <name type="common">Human</name>
    <dbReference type="NCBI Taxonomy" id="9606"/>
    <lineage>
        <taxon>Eukaryota</taxon>
        <taxon>Metazoa</taxon>
        <taxon>Chordata</taxon>
        <taxon>Craniata</taxon>
        <taxon>Vertebrata</taxon>
        <taxon>Euteleostomi</taxon>
        <taxon>Mammalia</taxon>
        <taxon>Eutheria</taxon>
        <taxon>Euarchontoglires</taxon>
        <taxon>Primates</taxon>
        <taxon>Haplorrhini</taxon>
        <taxon>Catarrhini</taxon>
        <taxon>Hominidae</taxon>
        <taxon>Homo</taxon>
    </lineage>
</organism>
<evidence type="ECO:0000255" key="1"/>
<evidence type="ECO:0000255" key="2">
    <source>
        <dbReference type="PROSITE-ProRule" id="PRU00521"/>
    </source>
</evidence>
<evidence type="ECO:0000305" key="3"/>
<comment type="function">
    <text>Receptor for extracellular UDP &gt; UTP &gt; ATP. The activity of this receptor is mediated by G proteins which activate a phosphatidylinositol-calcium second messenger system.</text>
</comment>
<comment type="interaction">
    <interactant intactId="EBI-10235794">
        <id>Q15077</id>
    </interactant>
    <interactant intactId="EBI-286709">
        <id>P55060</id>
        <label>CSE1L</label>
    </interactant>
    <organismsDiffer>false</organismsDiffer>
    <experiments>2</experiments>
</comment>
<comment type="interaction">
    <interactant intactId="EBI-10235794">
        <id>Q15077</id>
    </interactant>
    <interactant intactId="EBI-747754">
        <id>P28799</id>
        <label>GRN</label>
    </interactant>
    <organismsDiffer>false</organismsDiffer>
    <experiments>3</experiments>
</comment>
<comment type="interaction">
    <interactant intactId="EBI-10235794">
        <id>Q15077</id>
    </interactant>
    <interactant intactId="EBI-740785">
        <id>P49639</id>
        <label>HOXA1</label>
    </interactant>
    <organismsDiffer>false</organismsDiffer>
    <experiments>5</experiments>
</comment>
<comment type="interaction">
    <interactant intactId="EBI-10235794">
        <id>Q15077</id>
    </interactant>
    <interactant intactId="EBI-286758">
        <id>Q14974</id>
        <label>KPNB1</label>
    </interactant>
    <organismsDiffer>false</organismsDiffer>
    <experiments>4</experiments>
</comment>
<comment type="interaction">
    <interactant intactId="EBI-10235794">
        <id>Q15077</id>
    </interactant>
    <interactant intactId="EBI-11959885">
        <id>Q07627</id>
        <label>KRTAP1-1</label>
    </interactant>
    <organismsDiffer>false</organismsDiffer>
    <experiments>3</experiments>
</comment>
<comment type="interaction">
    <interactant intactId="EBI-10235794">
        <id>Q15077</id>
    </interactant>
    <interactant intactId="EBI-10172290">
        <id>P60409</id>
        <label>KRTAP10-7</label>
    </interactant>
    <organismsDiffer>false</organismsDiffer>
    <experiments>3</experiments>
</comment>
<comment type="interaction">
    <interactant intactId="EBI-10235794">
        <id>Q15077</id>
    </interactant>
    <interactant intactId="EBI-10171774">
        <id>P60410</id>
        <label>KRTAP10-8</label>
    </interactant>
    <organismsDiffer>false</organismsDiffer>
    <experiments>3</experiments>
</comment>
<comment type="interaction">
    <interactant intactId="EBI-10235794">
        <id>Q15077</id>
    </interactant>
    <interactant intactId="EBI-11953334">
        <id>P60328</id>
        <label>KRTAP12-3</label>
    </interactant>
    <organismsDiffer>false</organismsDiffer>
    <experiments>3</experiments>
</comment>
<comment type="interaction">
    <interactant intactId="EBI-10235794">
        <id>Q15077</id>
    </interactant>
    <interactant intactId="EBI-14065470">
        <id>Q9BYR9</id>
        <label>KRTAP2-4</label>
    </interactant>
    <organismsDiffer>false</organismsDiffer>
    <experiments>3</experiments>
</comment>
<comment type="interaction">
    <interactant intactId="EBI-10235794">
        <id>Q15077</id>
    </interactant>
    <interactant intactId="EBI-3957694">
        <id>Q9BYR6</id>
        <label>KRTAP3-3</label>
    </interactant>
    <organismsDiffer>false</organismsDiffer>
    <experiments>3</experiments>
</comment>
<comment type="interaction">
    <interactant intactId="EBI-10235794">
        <id>Q15077</id>
    </interactant>
    <interactant intactId="EBI-3958099">
        <id>P26371</id>
        <label>KRTAP5-9</label>
    </interactant>
    <organismsDiffer>false</organismsDiffer>
    <experiments>3</experiments>
</comment>
<comment type="interaction">
    <interactant intactId="EBI-10235794">
        <id>Q15077</id>
    </interactant>
    <interactant intactId="EBI-1044640">
        <id>Q9BYQ4</id>
        <label>KRTAP9-2</label>
    </interactant>
    <organismsDiffer>false</organismsDiffer>
    <experiments>5</experiments>
</comment>
<comment type="interaction">
    <interactant intactId="EBI-10235794">
        <id>Q15077</id>
    </interactant>
    <interactant intactId="EBI-2689785">
        <id>Q8NI22</id>
        <label>MCFD2</label>
    </interactant>
    <organismsDiffer>false</organismsDiffer>
    <experiments>3</experiments>
</comment>
<comment type="interaction">
    <interactant intactId="EBI-10235794">
        <id>Q15077</id>
    </interactant>
    <interactant intactId="EBI-22310682">
        <id>P0DPK4</id>
        <label>NOTCH2NLC</label>
    </interactant>
    <organismsDiffer>false</organismsDiffer>
    <experiments>3</experiments>
</comment>
<comment type="interaction">
    <interactant intactId="EBI-10235794">
        <id>Q15077</id>
    </interactant>
    <interactant intactId="EBI-740019">
        <id>O15162</id>
        <label>PLSCR1</label>
    </interactant>
    <organismsDiffer>false</organismsDiffer>
    <experiments>3</experiments>
</comment>
<comment type="interaction">
    <interactant intactId="EBI-10235794">
        <id>Q15077</id>
    </interactant>
    <interactant intactId="EBI-720609">
        <id>O76024</id>
        <label>WFS1</label>
    </interactant>
    <organismsDiffer>false</organismsDiffer>
    <experiments>3</experiments>
</comment>
<comment type="subcellular location">
    <subcellularLocation>
        <location>Cell membrane</location>
        <topology>Multi-pass membrane protein</topology>
    </subcellularLocation>
</comment>
<comment type="similarity">
    <text evidence="2">Belongs to the G-protein coupled receptor 1 family.</text>
</comment>